<comment type="function">
    <text evidence="1">Loosely associated component of the core of photosystem II (PSII), it is not always seen in crystals. PSII is a light-driven water plastoquinone oxidoreductase, using light energy to abstract electrons from H(2)O, generating a proton gradient subsequently used for ATP formation.</text>
</comment>
<comment type="subunit">
    <text evidence="1">PSII is composed of 1 copy each of membrane proteins PsbA, PsbB, PsbC, PsbD, PsbE, PsbF, PsbH, PsbI, PsbJ, PsbK, PsbL, PsbM, PsbT, PsbX, PsbY, PsbZ, Psb30/Ycf12, peripheral proteins PsbO, CyanoQ (PsbQ), PsbU, PsbV and a large number of cofactors. It forms dimeric complexes.</text>
</comment>
<comment type="subcellular location">
    <subcellularLocation>
        <location evidence="1">Cellular thylakoid membrane</location>
        <topology evidence="1">Single-pass membrane protein</topology>
    </subcellularLocation>
</comment>
<comment type="similarity">
    <text evidence="1">Belongs to the PsbY family.</text>
</comment>
<name>PSBY_SYNPW</name>
<proteinExistence type="inferred from homology"/>
<feature type="chain" id="PRO_1000083251" description="Photosystem II reaction center protein Y">
    <location>
        <begin position="1"/>
        <end position="40"/>
    </location>
</feature>
<feature type="transmembrane region" description="Helical" evidence="1">
    <location>
        <begin position="5"/>
        <end position="23"/>
    </location>
</feature>
<keyword id="KW-0472">Membrane</keyword>
<keyword id="KW-0602">Photosynthesis</keyword>
<keyword id="KW-0604">Photosystem II</keyword>
<keyword id="KW-1185">Reference proteome</keyword>
<keyword id="KW-0793">Thylakoid</keyword>
<keyword id="KW-0812">Transmembrane</keyword>
<keyword id="KW-1133">Transmembrane helix</keyword>
<gene>
    <name evidence="1" type="primary">psbY</name>
    <name type="ordered locus">SynWH7803_1383</name>
</gene>
<sequence length="40" mass="4320">MDLRLVLVASPILLALGWAGFNIGRAAVGQLQLMIKRSRA</sequence>
<accession>A5GLJ4</accession>
<organism>
    <name type="scientific">Synechococcus sp. (strain WH7803)</name>
    <dbReference type="NCBI Taxonomy" id="32051"/>
    <lineage>
        <taxon>Bacteria</taxon>
        <taxon>Bacillati</taxon>
        <taxon>Cyanobacteriota</taxon>
        <taxon>Cyanophyceae</taxon>
        <taxon>Synechococcales</taxon>
        <taxon>Synechococcaceae</taxon>
        <taxon>Synechococcus</taxon>
    </lineage>
</organism>
<evidence type="ECO:0000255" key="1">
    <source>
        <dbReference type="HAMAP-Rule" id="MF_00717"/>
    </source>
</evidence>
<protein>
    <recommendedName>
        <fullName evidence="1">Photosystem II reaction center protein Y</fullName>
    </recommendedName>
</protein>
<reference key="1">
    <citation type="submission" date="2006-05" db="EMBL/GenBank/DDBJ databases">
        <authorList>
            <consortium name="Genoscope"/>
        </authorList>
    </citation>
    <scope>NUCLEOTIDE SEQUENCE [LARGE SCALE GENOMIC DNA]</scope>
    <source>
        <strain>WH7803</strain>
    </source>
</reference>
<dbReference type="EMBL" id="CT971583">
    <property type="protein sequence ID" value="CAK23809.1"/>
    <property type="molecule type" value="Genomic_DNA"/>
</dbReference>
<dbReference type="SMR" id="A5GLJ4"/>
<dbReference type="STRING" id="32051.SynWH7803_1383"/>
<dbReference type="KEGG" id="syx:SynWH7803_1383"/>
<dbReference type="eggNOG" id="ENOG502ZJ2H">
    <property type="taxonomic scope" value="Bacteria"/>
</dbReference>
<dbReference type="HOGENOM" id="CLU_218393_1_0_3"/>
<dbReference type="OrthoDB" id="561045at2"/>
<dbReference type="Proteomes" id="UP000001566">
    <property type="component" value="Chromosome"/>
</dbReference>
<dbReference type="GO" id="GO:0009523">
    <property type="term" value="C:photosystem II"/>
    <property type="evidence" value="ECO:0007669"/>
    <property type="project" value="UniProtKB-KW"/>
</dbReference>
<dbReference type="GO" id="GO:0031676">
    <property type="term" value="C:plasma membrane-derived thylakoid membrane"/>
    <property type="evidence" value="ECO:0007669"/>
    <property type="project" value="UniProtKB-SubCell"/>
</dbReference>
<dbReference type="GO" id="GO:0030145">
    <property type="term" value="F:manganese ion binding"/>
    <property type="evidence" value="ECO:0007669"/>
    <property type="project" value="InterPro"/>
</dbReference>
<dbReference type="GO" id="GO:0015979">
    <property type="term" value="P:photosynthesis"/>
    <property type="evidence" value="ECO:0007669"/>
    <property type="project" value="UniProtKB-UniRule"/>
</dbReference>
<dbReference type="HAMAP" id="MF_00717">
    <property type="entry name" value="PSII_PsbY"/>
    <property type="match status" value="1"/>
</dbReference>
<dbReference type="InterPro" id="IPR009388">
    <property type="entry name" value="PSII_PsbY"/>
</dbReference>
<dbReference type="NCBIfam" id="NF009711">
    <property type="entry name" value="PRK13240.1"/>
    <property type="match status" value="1"/>
</dbReference>
<dbReference type="Pfam" id="PF06298">
    <property type="entry name" value="PsbY"/>
    <property type="match status" value="1"/>
</dbReference>